<proteinExistence type="predicted"/>
<evidence type="ECO:0000255" key="1"/>
<evidence type="ECO:0000256" key="2">
    <source>
        <dbReference type="SAM" id="MobiDB-lite"/>
    </source>
</evidence>
<evidence type="ECO:0000305" key="3"/>
<sequence>MKNNDKKKEVQRKYREEIKKKKQKNEDNKNFIKETIIVVTIIVLFIFFTYTLQGF</sequence>
<organism>
    <name type="scientific">Bacillus subtilis (strain 168)</name>
    <dbReference type="NCBI Taxonomy" id="224308"/>
    <lineage>
        <taxon>Bacteria</taxon>
        <taxon>Bacillati</taxon>
        <taxon>Bacillota</taxon>
        <taxon>Bacilli</taxon>
        <taxon>Bacillales</taxon>
        <taxon>Bacillaceae</taxon>
        <taxon>Bacillus</taxon>
    </lineage>
</organism>
<gene>
    <name type="primary">yqaD</name>
    <name type="ordered locus">BSU26360</name>
</gene>
<protein>
    <recommendedName>
        <fullName>Uncharacterized protein YqaD</fullName>
    </recommendedName>
</protein>
<reference key="1">
    <citation type="journal article" date="1995" name="Microbiology">
        <title>Complete nucleotide sequence of a skin element excised by DNA rearrangement during sporulation in Bacillus subtilis.</title>
        <authorList>
            <person name="Takemaru K."/>
            <person name="Mizuno M."/>
            <person name="Sato T."/>
            <person name="Takeuchi M."/>
            <person name="Kobayashi Y."/>
        </authorList>
    </citation>
    <scope>NUCLEOTIDE SEQUENCE [GENOMIC DNA]</scope>
    <source>
        <strain>168 / JH642</strain>
    </source>
</reference>
<reference key="2">
    <citation type="journal article" date="1996" name="Microbiology">
        <title>Systematic sequencing of the 283 kb 210 degrees-232 degrees region of the Bacillus subtilis genome containing the skin element and many sporulation genes.</title>
        <authorList>
            <person name="Mizuno M."/>
            <person name="Masuda S."/>
            <person name="Takemaru K."/>
            <person name="Hosono S."/>
            <person name="Sato T."/>
            <person name="Takeuchi M."/>
            <person name="Kobayashi Y."/>
        </authorList>
    </citation>
    <scope>NUCLEOTIDE SEQUENCE [GENOMIC DNA]</scope>
    <source>
        <strain>168 / JH642</strain>
    </source>
</reference>
<reference key="3">
    <citation type="journal article" date="1997" name="Nature">
        <title>The complete genome sequence of the Gram-positive bacterium Bacillus subtilis.</title>
        <authorList>
            <person name="Kunst F."/>
            <person name="Ogasawara N."/>
            <person name="Moszer I."/>
            <person name="Albertini A.M."/>
            <person name="Alloni G."/>
            <person name="Azevedo V."/>
            <person name="Bertero M.G."/>
            <person name="Bessieres P."/>
            <person name="Bolotin A."/>
            <person name="Borchert S."/>
            <person name="Borriss R."/>
            <person name="Boursier L."/>
            <person name="Brans A."/>
            <person name="Braun M."/>
            <person name="Brignell S.C."/>
            <person name="Bron S."/>
            <person name="Brouillet S."/>
            <person name="Bruschi C.V."/>
            <person name="Caldwell B."/>
            <person name="Capuano V."/>
            <person name="Carter N.M."/>
            <person name="Choi S.-K."/>
            <person name="Codani J.-J."/>
            <person name="Connerton I.F."/>
            <person name="Cummings N.J."/>
            <person name="Daniel R.A."/>
            <person name="Denizot F."/>
            <person name="Devine K.M."/>
            <person name="Duesterhoeft A."/>
            <person name="Ehrlich S.D."/>
            <person name="Emmerson P.T."/>
            <person name="Entian K.-D."/>
            <person name="Errington J."/>
            <person name="Fabret C."/>
            <person name="Ferrari E."/>
            <person name="Foulger D."/>
            <person name="Fritz C."/>
            <person name="Fujita M."/>
            <person name="Fujita Y."/>
            <person name="Fuma S."/>
            <person name="Galizzi A."/>
            <person name="Galleron N."/>
            <person name="Ghim S.-Y."/>
            <person name="Glaser P."/>
            <person name="Goffeau A."/>
            <person name="Golightly E.J."/>
            <person name="Grandi G."/>
            <person name="Guiseppi G."/>
            <person name="Guy B.J."/>
            <person name="Haga K."/>
            <person name="Haiech J."/>
            <person name="Harwood C.R."/>
            <person name="Henaut A."/>
            <person name="Hilbert H."/>
            <person name="Holsappel S."/>
            <person name="Hosono S."/>
            <person name="Hullo M.-F."/>
            <person name="Itaya M."/>
            <person name="Jones L.-M."/>
            <person name="Joris B."/>
            <person name="Karamata D."/>
            <person name="Kasahara Y."/>
            <person name="Klaerr-Blanchard M."/>
            <person name="Klein C."/>
            <person name="Kobayashi Y."/>
            <person name="Koetter P."/>
            <person name="Koningstein G."/>
            <person name="Krogh S."/>
            <person name="Kumano M."/>
            <person name="Kurita K."/>
            <person name="Lapidus A."/>
            <person name="Lardinois S."/>
            <person name="Lauber J."/>
            <person name="Lazarevic V."/>
            <person name="Lee S.-M."/>
            <person name="Levine A."/>
            <person name="Liu H."/>
            <person name="Masuda S."/>
            <person name="Mauel C."/>
            <person name="Medigue C."/>
            <person name="Medina N."/>
            <person name="Mellado R.P."/>
            <person name="Mizuno M."/>
            <person name="Moestl D."/>
            <person name="Nakai S."/>
            <person name="Noback M."/>
            <person name="Noone D."/>
            <person name="O'Reilly M."/>
            <person name="Ogawa K."/>
            <person name="Ogiwara A."/>
            <person name="Oudega B."/>
            <person name="Park S.-H."/>
            <person name="Parro V."/>
            <person name="Pohl T.M."/>
            <person name="Portetelle D."/>
            <person name="Porwollik S."/>
            <person name="Prescott A.M."/>
            <person name="Presecan E."/>
            <person name="Pujic P."/>
            <person name="Purnelle B."/>
            <person name="Rapoport G."/>
            <person name="Rey M."/>
            <person name="Reynolds S."/>
            <person name="Rieger M."/>
            <person name="Rivolta C."/>
            <person name="Rocha E."/>
            <person name="Roche B."/>
            <person name="Rose M."/>
            <person name="Sadaie Y."/>
            <person name="Sato T."/>
            <person name="Scanlan E."/>
            <person name="Schleich S."/>
            <person name="Schroeter R."/>
            <person name="Scoffone F."/>
            <person name="Sekiguchi J."/>
            <person name="Sekowska A."/>
            <person name="Seror S.J."/>
            <person name="Serror P."/>
            <person name="Shin B.-S."/>
            <person name="Soldo B."/>
            <person name="Sorokin A."/>
            <person name="Tacconi E."/>
            <person name="Takagi T."/>
            <person name="Takahashi H."/>
            <person name="Takemaru K."/>
            <person name="Takeuchi M."/>
            <person name="Tamakoshi A."/>
            <person name="Tanaka T."/>
            <person name="Terpstra P."/>
            <person name="Tognoni A."/>
            <person name="Tosato V."/>
            <person name="Uchiyama S."/>
            <person name="Vandenbol M."/>
            <person name="Vannier F."/>
            <person name="Vassarotti A."/>
            <person name="Viari A."/>
            <person name="Wambutt R."/>
            <person name="Wedler E."/>
            <person name="Wedler H."/>
            <person name="Weitzenegger T."/>
            <person name="Winters P."/>
            <person name="Wipat A."/>
            <person name="Yamamoto H."/>
            <person name="Yamane K."/>
            <person name="Yasumoto K."/>
            <person name="Yata K."/>
            <person name="Yoshida K."/>
            <person name="Yoshikawa H.-F."/>
            <person name="Zumstein E."/>
            <person name="Yoshikawa H."/>
            <person name="Danchin A."/>
        </authorList>
    </citation>
    <scope>NUCLEOTIDE SEQUENCE [LARGE SCALE GENOMIC DNA]</scope>
    <source>
        <strain>168</strain>
    </source>
</reference>
<reference key="4">
    <citation type="journal article" date="1995" name="Gene">
        <title>Analysis of a Bacillus subtilis genome fragment using a co-operative computer system prototype.</title>
        <authorList>
            <person name="Medigue C."/>
            <person name="Moszer I."/>
            <person name="Viari A."/>
            <person name="Danchin A."/>
        </authorList>
    </citation>
    <scope>IDENTIFICATION</scope>
</reference>
<accession>P45901</accession>
<feature type="chain" id="PRO_0000049738" description="Uncharacterized protein YqaD">
    <location>
        <begin position="1"/>
        <end position="55"/>
    </location>
</feature>
<feature type="transmembrane region" description="Helical" evidence="1">
    <location>
        <begin position="35"/>
        <end position="55"/>
    </location>
</feature>
<feature type="region of interest" description="Disordered" evidence="2">
    <location>
        <begin position="1"/>
        <end position="25"/>
    </location>
</feature>
<comment type="subcellular location">
    <subcellularLocation>
        <location evidence="3">Membrane</location>
        <topology evidence="3">Single-pass membrane protein</topology>
    </subcellularLocation>
</comment>
<keyword id="KW-0472">Membrane</keyword>
<keyword id="KW-1185">Reference proteome</keyword>
<keyword id="KW-0812">Transmembrane</keyword>
<keyword id="KW-1133">Transmembrane helix</keyword>
<dbReference type="EMBL" id="D32216">
    <property type="protein sequence ID" value="BAA06917.1"/>
    <property type="molecule type" value="Genomic_DNA"/>
</dbReference>
<dbReference type="EMBL" id="D84432">
    <property type="protein sequence ID" value="BAA12378.1"/>
    <property type="molecule type" value="Genomic_DNA"/>
</dbReference>
<dbReference type="EMBL" id="AL009126">
    <property type="protein sequence ID" value="CAB14577.1"/>
    <property type="molecule type" value="Genomic_DNA"/>
</dbReference>
<dbReference type="PIR" id="C69944">
    <property type="entry name" value="C69944"/>
</dbReference>
<dbReference type="RefSeq" id="NP_390513.1">
    <property type="nucleotide sequence ID" value="NC_000964.3"/>
</dbReference>
<dbReference type="RefSeq" id="WP_003229900.1">
    <property type="nucleotide sequence ID" value="NZ_OZ025638.1"/>
</dbReference>
<dbReference type="SMR" id="P45901"/>
<dbReference type="FunCoup" id="P45901">
    <property type="interactions" value="37"/>
</dbReference>
<dbReference type="PaxDb" id="224308-BSU26360"/>
<dbReference type="EnsemblBacteria" id="CAB14577">
    <property type="protein sequence ID" value="CAB14577"/>
    <property type="gene ID" value="BSU_26360"/>
</dbReference>
<dbReference type="GeneID" id="937674"/>
<dbReference type="KEGG" id="bsu:BSU26360"/>
<dbReference type="PATRIC" id="fig|224308.179.peg.2864"/>
<dbReference type="InParanoid" id="P45901"/>
<dbReference type="BioCyc" id="BSUB:BSU26360-MONOMER"/>
<dbReference type="Proteomes" id="UP000001570">
    <property type="component" value="Chromosome"/>
</dbReference>
<dbReference type="GO" id="GO:0016020">
    <property type="term" value="C:membrane"/>
    <property type="evidence" value="ECO:0007669"/>
    <property type="project" value="UniProtKB-SubCell"/>
</dbReference>
<name>YQAD_BACSU</name>